<proteinExistence type="inferred from homology"/>
<name>ISPE_FRATO</name>
<evidence type="ECO:0000255" key="1">
    <source>
        <dbReference type="HAMAP-Rule" id="MF_00061"/>
    </source>
</evidence>
<sequence>MANIKAKKYYSYAKINLFLHILNKRTDGYHNLQTWFTFLDLKDQLTFSFNNSREINISSNISIAAKQDNLVYKAIKKFQQSYRVQDIGVDIEIKKNIPMGAGLGGGSSNAATTLIALRDYYLPQLSNEEMIPLAVKLGADVPIFVYGKSAWAEGIGEILYHKDFSPQYALLIKPDIHISTKEFFTSEDLIKSSVLISKDLGFDKSIMHNDFENVFYAKYPEFSQYLKELDSDFRMTGTGSCFYLLSADKNKLEQLTRKINKPLDKWLVKTLNYVY</sequence>
<feature type="chain" id="PRO_1000007850" description="4-diphosphocytidyl-2-C-methyl-D-erythritol kinase">
    <location>
        <begin position="1"/>
        <end position="275"/>
    </location>
</feature>
<feature type="active site" evidence="1">
    <location>
        <position position="14"/>
    </location>
</feature>
<feature type="active site" evidence="1">
    <location>
        <position position="140"/>
    </location>
</feature>
<feature type="binding site" evidence="1">
    <location>
        <begin position="98"/>
        <end position="108"/>
    </location>
    <ligand>
        <name>ATP</name>
        <dbReference type="ChEBI" id="CHEBI:30616"/>
    </ligand>
</feature>
<protein>
    <recommendedName>
        <fullName evidence="1">4-diphosphocytidyl-2-C-methyl-D-erythritol kinase</fullName>
        <shortName evidence="1">CMK</shortName>
        <ecNumber evidence="1">2.7.1.148</ecNumber>
    </recommendedName>
    <alternativeName>
        <fullName evidence="1">4-(cytidine-5'-diphospho)-2-C-methyl-D-erythritol kinase</fullName>
    </alternativeName>
</protein>
<comment type="function">
    <text evidence="1">Catalyzes the phosphorylation of the position 2 hydroxy group of 4-diphosphocytidyl-2C-methyl-D-erythritol.</text>
</comment>
<comment type="catalytic activity">
    <reaction evidence="1">
        <text>4-CDP-2-C-methyl-D-erythritol + ATP = 4-CDP-2-C-methyl-D-erythritol 2-phosphate + ADP + H(+)</text>
        <dbReference type="Rhea" id="RHEA:18437"/>
        <dbReference type="ChEBI" id="CHEBI:15378"/>
        <dbReference type="ChEBI" id="CHEBI:30616"/>
        <dbReference type="ChEBI" id="CHEBI:57823"/>
        <dbReference type="ChEBI" id="CHEBI:57919"/>
        <dbReference type="ChEBI" id="CHEBI:456216"/>
        <dbReference type="EC" id="2.7.1.148"/>
    </reaction>
</comment>
<comment type="pathway">
    <text evidence="1">Isoprenoid biosynthesis; isopentenyl diphosphate biosynthesis via DXP pathway; isopentenyl diphosphate from 1-deoxy-D-xylulose 5-phosphate: step 3/6.</text>
</comment>
<comment type="similarity">
    <text evidence="1">Belongs to the GHMP kinase family. IspE subfamily.</text>
</comment>
<organism>
    <name type="scientific">Francisella tularensis subsp. holarctica (strain OSU18)</name>
    <dbReference type="NCBI Taxonomy" id="393011"/>
    <lineage>
        <taxon>Bacteria</taxon>
        <taxon>Pseudomonadati</taxon>
        <taxon>Pseudomonadota</taxon>
        <taxon>Gammaproteobacteria</taxon>
        <taxon>Thiotrichales</taxon>
        <taxon>Francisellaceae</taxon>
        <taxon>Francisella</taxon>
    </lineage>
</organism>
<gene>
    <name evidence="1" type="primary">ispE</name>
    <name type="ordered locus">FTH_0144</name>
</gene>
<reference key="1">
    <citation type="journal article" date="2006" name="J. Bacteriol.">
        <title>Chromosome rearrangement and diversification of Francisella tularensis revealed by the type B (OSU18) genome sequence.</title>
        <authorList>
            <person name="Petrosino J.F."/>
            <person name="Xiang Q."/>
            <person name="Karpathy S.E."/>
            <person name="Jiang H."/>
            <person name="Yerrapragada S."/>
            <person name="Liu Y."/>
            <person name="Gioia J."/>
            <person name="Hemphill L."/>
            <person name="Gonzalez A."/>
            <person name="Raghavan T.M."/>
            <person name="Uzman A."/>
            <person name="Fox G.E."/>
            <person name="Highlander S."/>
            <person name="Reichard M."/>
            <person name="Morton R.J."/>
            <person name="Clinkenbeard K.D."/>
            <person name="Weinstock G.M."/>
        </authorList>
    </citation>
    <scope>NUCLEOTIDE SEQUENCE [LARGE SCALE GENOMIC DNA]</scope>
    <source>
        <strain>OSU18</strain>
    </source>
</reference>
<keyword id="KW-0067">ATP-binding</keyword>
<keyword id="KW-0414">Isoprene biosynthesis</keyword>
<keyword id="KW-0418">Kinase</keyword>
<keyword id="KW-0547">Nucleotide-binding</keyword>
<keyword id="KW-0808">Transferase</keyword>
<accession>Q0BP04</accession>
<dbReference type="EC" id="2.7.1.148" evidence="1"/>
<dbReference type="EMBL" id="CP000437">
    <property type="protein sequence ID" value="ABI82180.1"/>
    <property type="molecule type" value="Genomic_DNA"/>
</dbReference>
<dbReference type="RefSeq" id="WP_003014135.1">
    <property type="nucleotide sequence ID" value="NC_017463.1"/>
</dbReference>
<dbReference type="SMR" id="Q0BP04"/>
<dbReference type="KEGG" id="fth:FTH_0144"/>
<dbReference type="UniPathway" id="UPA00056">
    <property type="reaction ID" value="UER00094"/>
</dbReference>
<dbReference type="GO" id="GO:0050515">
    <property type="term" value="F:4-(cytidine 5'-diphospho)-2-C-methyl-D-erythritol kinase activity"/>
    <property type="evidence" value="ECO:0007669"/>
    <property type="project" value="UniProtKB-UniRule"/>
</dbReference>
<dbReference type="GO" id="GO:0005524">
    <property type="term" value="F:ATP binding"/>
    <property type="evidence" value="ECO:0007669"/>
    <property type="project" value="UniProtKB-UniRule"/>
</dbReference>
<dbReference type="GO" id="GO:0019288">
    <property type="term" value="P:isopentenyl diphosphate biosynthetic process, methylerythritol 4-phosphate pathway"/>
    <property type="evidence" value="ECO:0007669"/>
    <property type="project" value="UniProtKB-UniRule"/>
</dbReference>
<dbReference type="GO" id="GO:0016114">
    <property type="term" value="P:terpenoid biosynthetic process"/>
    <property type="evidence" value="ECO:0007669"/>
    <property type="project" value="InterPro"/>
</dbReference>
<dbReference type="Gene3D" id="3.30.230.10">
    <property type="match status" value="1"/>
</dbReference>
<dbReference type="Gene3D" id="3.30.70.890">
    <property type="entry name" value="GHMP kinase, C-terminal domain"/>
    <property type="match status" value="1"/>
</dbReference>
<dbReference type="HAMAP" id="MF_00061">
    <property type="entry name" value="IspE"/>
    <property type="match status" value="1"/>
</dbReference>
<dbReference type="InterPro" id="IPR013750">
    <property type="entry name" value="GHMP_kinase_C_dom"/>
</dbReference>
<dbReference type="InterPro" id="IPR036554">
    <property type="entry name" value="GHMP_kinase_C_sf"/>
</dbReference>
<dbReference type="InterPro" id="IPR006204">
    <property type="entry name" value="GHMP_kinase_N_dom"/>
</dbReference>
<dbReference type="InterPro" id="IPR004424">
    <property type="entry name" value="IspE"/>
</dbReference>
<dbReference type="InterPro" id="IPR020568">
    <property type="entry name" value="Ribosomal_Su5_D2-typ_SF"/>
</dbReference>
<dbReference type="InterPro" id="IPR014721">
    <property type="entry name" value="Ribsml_uS5_D2-typ_fold_subgr"/>
</dbReference>
<dbReference type="NCBIfam" id="TIGR00154">
    <property type="entry name" value="ispE"/>
    <property type="match status" value="1"/>
</dbReference>
<dbReference type="PANTHER" id="PTHR43527">
    <property type="entry name" value="4-DIPHOSPHOCYTIDYL-2-C-METHYL-D-ERYTHRITOL KINASE, CHLOROPLASTIC"/>
    <property type="match status" value="1"/>
</dbReference>
<dbReference type="PANTHER" id="PTHR43527:SF2">
    <property type="entry name" value="4-DIPHOSPHOCYTIDYL-2-C-METHYL-D-ERYTHRITOL KINASE, CHLOROPLASTIC"/>
    <property type="match status" value="1"/>
</dbReference>
<dbReference type="Pfam" id="PF08544">
    <property type="entry name" value="GHMP_kinases_C"/>
    <property type="match status" value="1"/>
</dbReference>
<dbReference type="Pfam" id="PF00288">
    <property type="entry name" value="GHMP_kinases_N"/>
    <property type="match status" value="1"/>
</dbReference>
<dbReference type="PIRSF" id="PIRSF010376">
    <property type="entry name" value="IspE"/>
    <property type="match status" value="1"/>
</dbReference>
<dbReference type="SUPFAM" id="SSF55060">
    <property type="entry name" value="GHMP Kinase, C-terminal domain"/>
    <property type="match status" value="1"/>
</dbReference>
<dbReference type="SUPFAM" id="SSF54211">
    <property type="entry name" value="Ribosomal protein S5 domain 2-like"/>
    <property type="match status" value="1"/>
</dbReference>